<name>SSB1_PYRO7</name>
<proteinExistence type="evidence at protein level"/>
<sequence>MSTEVYDGAIGIDLGTTYSCVATYEGSNVEIIANEQGSFTTPSFVSFTADERLIGEAAKNQAAMNPANTVFDVKRLIGRRFDDPTVKKDMESWPFKVVDEDGNPKVEVEYLGTTHKFSPQEISAMVLVKMKEIAEAKIGKKVEKAVITVPAYFNDNQRQSTKDAGAISGLNVLRIINEPTAAAIAYGLGSGKSEKERNVLIYDLGGGTFDVSLLNIQGGVFTVKATAGDTHLGGQDFDTNLLDHCKKDFQRKTKKDLSGDARALRRLRTACERAKRTLSNGTQTTLEIDSLFDGEDFSLQITRAKFEELNQTAFKGTLDPVTQVLKDAGVDKAAVDEIVLVGGSTRIPKIQKLLSDYFGGKKLEKSINPDEAVAYGAAVQAGILSGKATSAETADLLLLDVVPLSLGVAMEGNIFAPVVPRGTTVPTLKKRSFTTVADQQQTVQFPVYQGERTNCSENVSLGEFTLAPIPPMRAGEPVLEVVFEVDVNGILKVTATEKTSGRSANITIANSVGKLSTSEIENMISEAEKYKTNDEEFTKKHEAKQQLESYIARVEDIISDPTLALKLKRGQKEKIENTMSEAMAQLELGESTADDLKKKELALKRAVTKAMSSR</sequence>
<comment type="function">
    <text evidence="3">Chaperone that interacts with the histone acetyltransferase HAT1 and mediates its translocation from the nucleus to the cytoplasm during germination and starvation conditions. Within the cytoplasm, HAT1 regulates autophagy via acetylation of the autophagy-related proteins ATG3 and ATG9.</text>
</comment>
<comment type="catalytic activity">
    <reaction evidence="2">
        <text>ATP + H2O = ADP + phosphate + H(+)</text>
        <dbReference type="Rhea" id="RHEA:13065"/>
        <dbReference type="ChEBI" id="CHEBI:15377"/>
        <dbReference type="ChEBI" id="CHEBI:15378"/>
        <dbReference type="ChEBI" id="CHEBI:30616"/>
        <dbReference type="ChEBI" id="CHEBI:43474"/>
        <dbReference type="ChEBI" id="CHEBI:456216"/>
        <dbReference type="EC" id="3.6.4.10"/>
    </reaction>
</comment>
<comment type="subunit">
    <text evidence="3">Interacts with HAT1 in starvation conditions.</text>
</comment>
<comment type="subcellular location">
    <subcellularLocation>
        <location evidence="6">Nucleus</location>
    </subcellularLocation>
    <subcellularLocation>
        <location evidence="6">Cytoplasm</location>
    </subcellularLocation>
</comment>
<comment type="disruption phenotype">
    <text evidence="3">Impairs the translocation of HAT1 from the nucleus to the cytoplasm upon starvation.</text>
</comment>
<comment type="similarity">
    <text evidence="5">Belongs to the heat shock protein 70 family.</text>
</comment>
<dbReference type="EC" id="3.6.4.10" evidence="2"/>
<dbReference type="EMBL" id="CM001235">
    <property type="protein sequence ID" value="EHA48746.1"/>
    <property type="molecule type" value="Genomic_DNA"/>
</dbReference>
<dbReference type="RefSeq" id="XP_003718330.1">
    <property type="nucleotide sequence ID" value="XM_003718282.1"/>
</dbReference>
<dbReference type="SMR" id="G4NAY4"/>
<dbReference type="FunCoup" id="G4NAY4">
    <property type="interactions" value="1449"/>
</dbReference>
<dbReference type="STRING" id="242507.G4NAY4"/>
<dbReference type="EnsemblFungi" id="MGG_11513T0">
    <property type="protein sequence ID" value="MGG_11513T0"/>
    <property type="gene ID" value="MGG_11513"/>
</dbReference>
<dbReference type="GeneID" id="5050670"/>
<dbReference type="KEGG" id="mgr:MGG_11513"/>
<dbReference type="VEuPathDB" id="FungiDB:MGG_11513"/>
<dbReference type="eggNOG" id="KOG0101">
    <property type="taxonomic scope" value="Eukaryota"/>
</dbReference>
<dbReference type="HOGENOM" id="CLU_005965_0_1_1"/>
<dbReference type="InParanoid" id="G4NAY4"/>
<dbReference type="OMA" id="NIPPMQA"/>
<dbReference type="OrthoDB" id="2401965at2759"/>
<dbReference type="PHI-base" id="PHI:8179"/>
<dbReference type="Proteomes" id="UP000009058">
    <property type="component" value="Chromosome 5"/>
</dbReference>
<dbReference type="GO" id="GO:0005829">
    <property type="term" value="C:cytosol"/>
    <property type="evidence" value="ECO:0007669"/>
    <property type="project" value="EnsemblFungi"/>
</dbReference>
<dbReference type="GO" id="GO:0005634">
    <property type="term" value="C:nucleus"/>
    <property type="evidence" value="ECO:0007669"/>
    <property type="project" value="UniProtKB-SubCell"/>
</dbReference>
<dbReference type="GO" id="GO:0005524">
    <property type="term" value="F:ATP binding"/>
    <property type="evidence" value="ECO:0007669"/>
    <property type="project" value="UniProtKB-KW"/>
</dbReference>
<dbReference type="GO" id="GO:0016887">
    <property type="term" value="F:ATP hydrolysis activity"/>
    <property type="evidence" value="ECO:0007669"/>
    <property type="project" value="RHEA"/>
</dbReference>
<dbReference type="GO" id="GO:0140662">
    <property type="term" value="F:ATP-dependent protein folding chaperone"/>
    <property type="evidence" value="ECO:0007669"/>
    <property type="project" value="InterPro"/>
</dbReference>
<dbReference type="GO" id="GO:0005049">
    <property type="term" value="F:nuclear export signal receptor activity"/>
    <property type="evidence" value="ECO:0000315"/>
    <property type="project" value="UniProtKB"/>
</dbReference>
<dbReference type="GO" id="GO:0051168">
    <property type="term" value="P:nuclear export"/>
    <property type="evidence" value="ECO:0000315"/>
    <property type="project" value="UniProtKB"/>
</dbReference>
<dbReference type="FunFam" id="3.90.640.10:FF:000002">
    <property type="entry name" value="Heat shock 70 kDa"/>
    <property type="match status" value="1"/>
</dbReference>
<dbReference type="FunFam" id="3.30.420.40:FF:000172">
    <property type="entry name" value="Heat shock 70 kDa protein"/>
    <property type="match status" value="2"/>
</dbReference>
<dbReference type="FunFam" id="1.20.1270.10:FF:000014">
    <property type="entry name" value="Heat shock protein 70"/>
    <property type="match status" value="1"/>
</dbReference>
<dbReference type="FunFam" id="3.30.420.40:FF:000026">
    <property type="entry name" value="Heat shock protein 70"/>
    <property type="match status" value="1"/>
</dbReference>
<dbReference type="FunFam" id="2.60.34.10:FF:000004">
    <property type="entry name" value="Heat shock protein SSB1"/>
    <property type="match status" value="1"/>
</dbReference>
<dbReference type="FunFam" id="3.30.30.30:FF:000005">
    <property type="entry name" value="Heat shock protein ssb1"/>
    <property type="match status" value="1"/>
</dbReference>
<dbReference type="Gene3D" id="1.20.1270.10">
    <property type="match status" value="1"/>
</dbReference>
<dbReference type="Gene3D" id="3.30.30.30">
    <property type="match status" value="1"/>
</dbReference>
<dbReference type="Gene3D" id="3.30.420.40">
    <property type="match status" value="2"/>
</dbReference>
<dbReference type="Gene3D" id="3.90.640.10">
    <property type="entry name" value="Actin, Chain A, domain 4"/>
    <property type="match status" value="1"/>
</dbReference>
<dbReference type="Gene3D" id="2.60.34.10">
    <property type="entry name" value="Substrate Binding Domain Of DNAk, Chain A, domain 1"/>
    <property type="match status" value="1"/>
</dbReference>
<dbReference type="InterPro" id="IPR043129">
    <property type="entry name" value="ATPase_NBD"/>
</dbReference>
<dbReference type="InterPro" id="IPR018181">
    <property type="entry name" value="Heat_shock_70_CS"/>
</dbReference>
<dbReference type="InterPro" id="IPR029048">
    <property type="entry name" value="HSP70_C_sf"/>
</dbReference>
<dbReference type="InterPro" id="IPR029047">
    <property type="entry name" value="HSP70_peptide-bd_sf"/>
</dbReference>
<dbReference type="InterPro" id="IPR013126">
    <property type="entry name" value="Hsp_70_fam"/>
</dbReference>
<dbReference type="NCBIfam" id="NF001413">
    <property type="entry name" value="PRK00290.1"/>
    <property type="match status" value="1"/>
</dbReference>
<dbReference type="PANTHER" id="PTHR19375">
    <property type="entry name" value="HEAT SHOCK PROTEIN 70KDA"/>
    <property type="match status" value="1"/>
</dbReference>
<dbReference type="Pfam" id="PF00012">
    <property type="entry name" value="HSP70"/>
    <property type="match status" value="1"/>
</dbReference>
<dbReference type="PRINTS" id="PR00301">
    <property type="entry name" value="HEATSHOCK70"/>
</dbReference>
<dbReference type="SUPFAM" id="SSF53067">
    <property type="entry name" value="Actin-like ATPase domain"/>
    <property type="match status" value="2"/>
</dbReference>
<dbReference type="SUPFAM" id="SSF100934">
    <property type="entry name" value="Heat shock protein 70kD (HSP70), C-terminal subdomain"/>
    <property type="match status" value="1"/>
</dbReference>
<dbReference type="SUPFAM" id="SSF100920">
    <property type="entry name" value="Heat shock protein 70kD (HSP70), peptide-binding domain"/>
    <property type="match status" value="1"/>
</dbReference>
<dbReference type="PROSITE" id="PS00297">
    <property type="entry name" value="HSP70_1"/>
    <property type="match status" value="1"/>
</dbReference>
<dbReference type="PROSITE" id="PS00329">
    <property type="entry name" value="HSP70_2"/>
    <property type="match status" value="1"/>
</dbReference>
<dbReference type="PROSITE" id="PS01036">
    <property type="entry name" value="HSP70_3"/>
    <property type="match status" value="1"/>
</dbReference>
<accession>G4NAY4</accession>
<keyword id="KW-0067">ATP-binding</keyword>
<keyword id="KW-0143">Chaperone</keyword>
<keyword id="KW-0963">Cytoplasm</keyword>
<keyword id="KW-0309">Germination</keyword>
<keyword id="KW-0378">Hydrolase</keyword>
<keyword id="KW-0547">Nucleotide-binding</keyword>
<keyword id="KW-0539">Nucleus</keyword>
<keyword id="KW-1185">Reference proteome</keyword>
<keyword id="KW-0346">Stress response</keyword>
<keyword id="KW-0843">Virulence</keyword>
<feature type="chain" id="PRO_0000447268" description="Heat shock protein SSB1">
    <location>
        <begin position="1"/>
        <end position="614"/>
    </location>
</feature>
<feature type="region of interest" description="Nucleotide binding domain (NBD)" evidence="1">
    <location>
        <begin position="1"/>
        <end position="392"/>
    </location>
</feature>
<feature type="region of interest" description="Inter-domain linker" evidence="1">
    <location>
        <begin position="393"/>
        <end position="403"/>
    </location>
</feature>
<feature type="region of interest" description="Substrate binding domain (SBD)" evidence="1">
    <location>
        <begin position="404"/>
        <end position="614"/>
    </location>
</feature>
<feature type="region of interest" description="Lid domain (SBDalpha)" evidence="1">
    <location>
        <begin position="517"/>
        <end position="613"/>
    </location>
</feature>
<feature type="short sequence motif" description="Nuclear export signal" evidence="1">
    <location>
        <begin position="575"/>
        <end position="583"/>
    </location>
</feature>
<feature type="binding site" evidence="1">
    <location>
        <begin position="16"/>
        <end position="18"/>
    </location>
    <ligand>
        <name>ATP</name>
        <dbReference type="ChEBI" id="CHEBI:30616"/>
    </ligand>
</feature>
<feature type="binding site" evidence="1">
    <location>
        <position position="74"/>
    </location>
    <ligand>
        <name>ATP</name>
        <dbReference type="ChEBI" id="CHEBI:30616"/>
    </ligand>
</feature>
<feature type="binding site" evidence="1">
    <location>
        <begin position="206"/>
        <end position="208"/>
    </location>
    <ligand>
        <name>ATP</name>
        <dbReference type="ChEBI" id="CHEBI:30616"/>
    </ligand>
</feature>
<feature type="binding site" evidence="1">
    <location>
        <begin position="272"/>
        <end position="279"/>
    </location>
    <ligand>
        <name>ATP</name>
        <dbReference type="ChEBI" id="CHEBI:30616"/>
    </ligand>
</feature>
<feature type="binding site" evidence="1">
    <location>
        <position position="343"/>
    </location>
    <ligand>
        <name>ATP</name>
        <dbReference type="ChEBI" id="CHEBI:30616"/>
    </ligand>
</feature>
<reference key="1">
    <citation type="journal article" date="2005" name="Nature">
        <title>The genome sequence of the rice blast fungus Magnaporthe grisea.</title>
        <authorList>
            <person name="Dean R.A."/>
            <person name="Talbot N.J."/>
            <person name="Ebbole D.J."/>
            <person name="Farman M.L."/>
            <person name="Mitchell T.K."/>
            <person name="Orbach M.J."/>
            <person name="Thon M.R."/>
            <person name="Kulkarni R."/>
            <person name="Xu J.-R."/>
            <person name="Pan H."/>
            <person name="Read N.D."/>
            <person name="Lee Y.-H."/>
            <person name="Carbone I."/>
            <person name="Brown D."/>
            <person name="Oh Y.Y."/>
            <person name="Donofrio N."/>
            <person name="Jeong J.S."/>
            <person name="Soanes D.M."/>
            <person name="Djonovic S."/>
            <person name="Kolomiets E."/>
            <person name="Rehmeyer C."/>
            <person name="Li W."/>
            <person name="Harding M."/>
            <person name="Kim S."/>
            <person name="Lebrun M.-H."/>
            <person name="Bohnert H."/>
            <person name="Coughlan S."/>
            <person name="Butler J."/>
            <person name="Calvo S.E."/>
            <person name="Ma L.-J."/>
            <person name="Nicol R."/>
            <person name="Purcell S."/>
            <person name="Nusbaum C."/>
            <person name="Galagan J.E."/>
            <person name="Birren B.W."/>
        </authorList>
    </citation>
    <scope>NUCLEOTIDE SEQUENCE [LARGE SCALE GENOMIC DNA]</scope>
    <source>
        <strain>70-15 / ATCC MYA-4617 / FGSC 8958</strain>
    </source>
</reference>
<reference key="2">
    <citation type="journal article" date="2019" name="Autophagy">
        <title>Histone acetyltransferase MoHat1 acetylates autophagy-related proteins MoAtg3 and MoAtg9 to orchestrate functional appressorium formation and pathogenicity in Magnaporthe oryzae.</title>
        <authorList>
            <person name="Yin Z."/>
            <person name="Chen C."/>
            <person name="Yang J."/>
            <person name="Feng W."/>
            <person name="Liu X."/>
            <person name="Zuo R."/>
            <person name="Wang J."/>
            <person name="Yang L."/>
            <person name="Zhong K."/>
            <person name="Gao C."/>
            <person name="Zhang H."/>
            <person name="Zheng X."/>
            <person name="Wang P."/>
            <person name="Zhang Z."/>
        </authorList>
    </citation>
    <scope>FUNCTION</scope>
    <scope>INTERACTION WITH HAT1</scope>
    <scope>DISRUPTION PHENOTYPE</scope>
</reference>
<gene>
    <name evidence="4" type="primary">SSB1</name>
    <name type="ORF">MGG_11513</name>
</gene>
<evidence type="ECO:0000250" key="1">
    <source>
        <dbReference type="UniProtKB" id="G0SCU5"/>
    </source>
</evidence>
<evidence type="ECO:0000250" key="2">
    <source>
        <dbReference type="UniProtKB" id="P11484"/>
    </source>
</evidence>
<evidence type="ECO:0000269" key="3">
    <source>
    </source>
</evidence>
<evidence type="ECO:0000303" key="4">
    <source>
    </source>
</evidence>
<evidence type="ECO:0000305" key="5"/>
<evidence type="ECO:0000305" key="6">
    <source>
    </source>
</evidence>
<protein>
    <recommendedName>
        <fullName evidence="4">Heat shock protein SSB1</fullName>
        <ecNumber evidence="2">3.6.4.10</ecNumber>
    </recommendedName>
    <alternativeName>
        <fullName evidence="4">HSP70 chaperone SSB1</fullName>
    </alternativeName>
</protein>
<organism>
    <name type="scientific">Pyricularia oryzae (strain 70-15 / ATCC MYA-4617 / FGSC 8958)</name>
    <name type="common">Rice blast fungus</name>
    <name type="synonym">Magnaporthe oryzae</name>
    <dbReference type="NCBI Taxonomy" id="242507"/>
    <lineage>
        <taxon>Eukaryota</taxon>
        <taxon>Fungi</taxon>
        <taxon>Dikarya</taxon>
        <taxon>Ascomycota</taxon>
        <taxon>Pezizomycotina</taxon>
        <taxon>Sordariomycetes</taxon>
        <taxon>Sordariomycetidae</taxon>
        <taxon>Magnaporthales</taxon>
        <taxon>Pyriculariaceae</taxon>
        <taxon>Pyricularia</taxon>
    </lineage>
</organism>